<gene>
    <name evidence="1" type="primary">rps16</name>
</gene>
<accession>Q06FX9</accession>
<proteinExistence type="inferred from homology"/>
<keyword id="KW-0150">Chloroplast</keyword>
<keyword id="KW-0934">Plastid</keyword>
<keyword id="KW-0687">Ribonucleoprotein</keyword>
<keyword id="KW-0689">Ribosomal protein</keyword>
<sequence>MVKLRLKRCGRKKRAVYRIVAIDVRSRREGRDLRKVGLYDPINNKTHLNVPAILYFIERGAQPTRTVNDLLKKAGVLKDTGIPVVGTLVSK</sequence>
<feature type="chain" id="PRO_0000276956" description="Small ribosomal subunit protein bS16c">
    <location>
        <begin position="1"/>
        <end position="91"/>
    </location>
</feature>
<geneLocation type="chloroplast"/>
<organism>
    <name type="scientific">Pelargonium hortorum</name>
    <name type="common">Common geranium</name>
    <name type="synonym">Pelargonium inquinans x Pelargonium zonale</name>
    <dbReference type="NCBI Taxonomy" id="4031"/>
    <lineage>
        <taxon>Eukaryota</taxon>
        <taxon>Viridiplantae</taxon>
        <taxon>Streptophyta</taxon>
        <taxon>Embryophyta</taxon>
        <taxon>Tracheophyta</taxon>
        <taxon>Spermatophyta</taxon>
        <taxon>Magnoliopsida</taxon>
        <taxon>eudicotyledons</taxon>
        <taxon>Gunneridae</taxon>
        <taxon>Pentapetalae</taxon>
        <taxon>rosids</taxon>
        <taxon>malvids</taxon>
        <taxon>Geraniales</taxon>
        <taxon>Geraniaceae</taxon>
        <taxon>Pelargonium</taxon>
    </lineage>
</organism>
<comment type="subcellular location">
    <subcellularLocation>
        <location>Plastid</location>
        <location>Chloroplast</location>
    </subcellularLocation>
</comment>
<comment type="similarity">
    <text evidence="1">Belongs to the bacterial ribosomal protein bS16 family.</text>
</comment>
<name>RR16_PELHO</name>
<reference key="1">
    <citation type="journal article" date="2006" name="Mol. Biol. Evol.">
        <title>The complete chloroplast genome sequence of Pelargonium x hortorum: organization and evolution of the largest and most highly rearranged chloroplast genome of land plants.</title>
        <authorList>
            <person name="Chumley T.W."/>
            <person name="Palmer J.D."/>
            <person name="Mower J.P."/>
            <person name="Fourcade H.M."/>
            <person name="Calie P.J."/>
            <person name="Boore J.L."/>
            <person name="Jansen R.K."/>
        </authorList>
    </citation>
    <scope>NUCLEOTIDE SEQUENCE [LARGE SCALE GENOMIC DNA]</scope>
    <source>
        <strain>cv. Ringo White</strain>
    </source>
</reference>
<evidence type="ECO:0000255" key="1">
    <source>
        <dbReference type="HAMAP-Rule" id="MF_00385"/>
    </source>
</evidence>
<evidence type="ECO:0000305" key="2"/>
<protein>
    <recommendedName>
        <fullName evidence="1">Small ribosomal subunit protein bS16c</fullName>
    </recommendedName>
    <alternativeName>
        <fullName evidence="2">30S ribosomal protein S16, chloroplastic</fullName>
    </alternativeName>
</protein>
<dbReference type="EMBL" id="DQ897681">
    <property type="protein sequence ID" value="ABI17243.1"/>
    <property type="molecule type" value="Genomic_DNA"/>
</dbReference>
<dbReference type="RefSeq" id="YP_784052.1">
    <property type="nucleotide sequence ID" value="NC_008454.1"/>
</dbReference>
<dbReference type="SMR" id="Q06FX9"/>
<dbReference type="GeneID" id="4362811"/>
<dbReference type="GO" id="GO:0009507">
    <property type="term" value="C:chloroplast"/>
    <property type="evidence" value="ECO:0007669"/>
    <property type="project" value="UniProtKB-SubCell"/>
</dbReference>
<dbReference type="GO" id="GO:0005739">
    <property type="term" value="C:mitochondrion"/>
    <property type="evidence" value="ECO:0007669"/>
    <property type="project" value="GOC"/>
</dbReference>
<dbReference type="GO" id="GO:0015935">
    <property type="term" value="C:small ribosomal subunit"/>
    <property type="evidence" value="ECO:0007669"/>
    <property type="project" value="TreeGrafter"/>
</dbReference>
<dbReference type="GO" id="GO:0003735">
    <property type="term" value="F:structural constituent of ribosome"/>
    <property type="evidence" value="ECO:0007669"/>
    <property type="project" value="InterPro"/>
</dbReference>
<dbReference type="GO" id="GO:0032543">
    <property type="term" value="P:mitochondrial translation"/>
    <property type="evidence" value="ECO:0007669"/>
    <property type="project" value="TreeGrafter"/>
</dbReference>
<dbReference type="FunFam" id="3.30.1320.10:FF:000003">
    <property type="entry name" value="30S ribosomal protein S16, chloroplastic"/>
    <property type="match status" value="1"/>
</dbReference>
<dbReference type="Gene3D" id="3.30.1320.10">
    <property type="match status" value="1"/>
</dbReference>
<dbReference type="HAMAP" id="MF_00385">
    <property type="entry name" value="Ribosomal_bS16"/>
    <property type="match status" value="1"/>
</dbReference>
<dbReference type="InterPro" id="IPR000307">
    <property type="entry name" value="Ribosomal_bS16"/>
</dbReference>
<dbReference type="InterPro" id="IPR020592">
    <property type="entry name" value="Ribosomal_bS16_CS"/>
</dbReference>
<dbReference type="InterPro" id="IPR023803">
    <property type="entry name" value="Ribosomal_bS16_dom_sf"/>
</dbReference>
<dbReference type="NCBIfam" id="TIGR00002">
    <property type="entry name" value="S16"/>
    <property type="match status" value="1"/>
</dbReference>
<dbReference type="PANTHER" id="PTHR12919">
    <property type="entry name" value="30S RIBOSOMAL PROTEIN S16"/>
    <property type="match status" value="1"/>
</dbReference>
<dbReference type="PANTHER" id="PTHR12919:SF20">
    <property type="entry name" value="SMALL RIBOSOMAL SUBUNIT PROTEIN BS16M"/>
    <property type="match status" value="1"/>
</dbReference>
<dbReference type="Pfam" id="PF00886">
    <property type="entry name" value="Ribosomal_S16"/>
    <property type="match status" value="1"/>
</dbReference>
<dbReference type="SUPFAM" id="SSF54565">
    <property type="entry name" value="Ribosomal protein S16"/>
    <property type="match status" value="1"/>
</dbReference>
<dbReference type="PROSITE" id="PS00732">
    <property type="entry name" value="RIBOSOMAL_S16"/>
    <property type="match status" value="1"/>
</dbReference>